<dbReference type="EC" id="5.1.3.8" evidence="1"/>
<dbReference type="EMBL" id="BC112532">
    <property type="protein sequence ID" value="AAI12533.1"/>
    <property type="molecule type" value="mRNA"/>
</dbReference>
<dbReference type="RefSeq" id="NP_001039688.1">
    <property type="nucleotide sequence ID" value="NM_001046223.1"/>
</dbReference>
<dbReference type="RefSeq" id="XP_024843762.1">
    <property type="nucleotide sequence ID" value="XM_024987994.2"/>
</dbReference>
<dbReference type="SMR" id="Q2KIS1"/>
<dbReference type="FunCoup" id="Q2KIS1">
    <property type="interactions" value="122"/>
</dbReference>
<dbReference type="STRING" id="9913.ENSBTAP00000054845"/>
<dbReference type="PaxDb" id="9913-ENSBTAP00000054845"/>
<dbReference type="GeneID" id="516214"/>
<dbReference type="KEGG" id="bta:516214"/>
<dbReference type="CTD" id="5973"/>
<dbReference type="VEuPathDB" id="HostDB:ENSBTAG00000047827"/>
<dbReference type="eggNOG" id="ENOG502QSDA">
    <property type="taxonomic scope" value="Eukaryota"/>
</dbReference>
<dbReference type="InParanoid" id="Q2KIS1"/>
<dbReference type="OrthoDB" id="414129at2759"/>
<dbReference type="Reactome" id="R-BTA-446210">
    <property type="pathway name" value="Synthesis of UDP-N-acetyl-glucosamine"/>
</dbReference>
<dbReference type="UniPathway" id="UPA00629"/>
<dbReference type="Proteomes" id="UP000009136">
    <property type="component" value="Chromosome X"/>
</dbReference>
<dbReference type="Bgee" id="ENSBTAG00000047827">
    <property type="expression patterns" value="Expressed in corpus epididymis and 107 other cell types or tissues"/>
</dbReference>
<dbReference type="GO" id="GO:0042802">
    <property type="term" value="F:identical protein binding"/>
    <property type="evidence" value="ECO:0000250"/>
    <property type="project" value="UniProtKB"/>
</dbReference>
<dbReference type="GO" id="GO:0050121">
    <property type="term" value="F:N-acylglucosamine 2-epimerase activity"/>
    <property type="evidence" value="ECO:0000250"/>
    <property type="project" value="UniProtKB"/>
</dbReference>
<dbReference type="GO" id="GO:0030414">
    <property type="term" value="F:peptidase inhibitor activity"/>
    <property type="evidence" value="ECO:0000250"/>
    <property type="project" value="UniProtKB"/>
</dbReference>
<dbReference type="GO" id="GO:0005975">
    <property type="term" value="P:carbohydrate metabolic process"/>
    <property type="evidence" value="ECO:0007669"/>
    <property type="project" value="InterPro"/>
</dbReference>
<dbReference type="GO" id="GO:0006044">
    <property type="term" value="P:N-acetylglucosamine metabolic process"/>
    <property type="evidence" value="ECO:0000318"/>
    <property type="project" value="GO_Central"/>
</dbReference>
<dbReference type="GO" id="GO:0006051">
    <property type="term" value="P:N-acetylmannosamine metabolic process"/>
    <property type="evidence" value="ECO:0000318"/>
    <property type="project" value="GO_Central"/>
</dbReference>
<dbReference type="GO" id="GO:0019262">
    <property type="term" value="P:N-acetylneuraminate catabolic process"/>
    <property type="evidence" value="ECO:0007669"/>
    <property type="project" value="UniProtKB-UniPathway"/>
</dbReference>
<dbReference type="CDD" id="cd00249">
    <property type="entry name" value="AGE"/>
    <property type="match status" value="1"/>
</dbReference>
<dbReference type="FunFam" id="1.50.10.10:FF:000021">
    <property type="entry name" value="N-acylglucosamine 2-epimerase"/>
    <property type="match status" value="1"/>
</dbReference>
<dbReference type="Gene3D" id="1.50.10.10">
    <property type="match status" value="1"/>
</dbReference>
<dbReference type="InterPro" id="IPR008928">
    <property type="entry name" value="6-hairpin_glycosidase_sf"/>
</dbReference>
<dbReference type="InterPro" id="IPR012341">
    <property type="entry name" value="6hp_glycosidase-like_sf"/>
</dbReference>
<dbReference type="InterPro" id="IPR010819">
    <property type="entry name" value="AGE/CE"/>
</dbReference>
<dbReference type="InterPro" id="IPR034116">
    <property type="entry name" value="AGE_dom"/>
</dbReference>
<dbReference type="PANTHER" id="PTHR15108">
    <property type="entry name" value="N-ACYLGLUCOSAMINE-2-EPIMERASE"/>
    <property type="match status" value="1"/>
</dbReference>
<dbReference type="Pfam" id="PF07221">
    <property type="entry name" value="GlcNAc_2-epim"/>
    <property type="match status" value="1"/>
</dbReference>
<dbReference type="SUPFAM" id="SSF48208">
    <property type="entry name" value="Six-hairpin glycosidases"/>
    <property type="match status" value="1"/>
</dbReference>
<protein>
    <recommendedName>
        <fullName>N-acylglucosamine 2-epimerase</fullName>
        <shortName>AGE</shortName>
        <ecNumber evidence="1">5.1.3.8</ecNumber>
    </recommendedName>
    <alternativeName>
        <fullName>GlcNAc 2-epimerase</fullName>
    </alternativeName>
    <alternativeName>
        <fullName>N-acetyl-D-glucosamine 2-epimerase</fullName>
    </alternativeName>
    <alternativeName>
        <fullName>Renin-binding protein</fullName>
        <shortName>RnBP</shortName>
    </alternativeName>
</protein>
<proteinExistence type="evidence at transcript level"/>
<organism>
    <name type="scientific">Bos taurus</name>
    <name type="common">Bovine</name>
    <dbReference type="NCBI Taxonomy" id="9913"/>
    <lineage>
        <taxon>Eukaryota</taxon>
        <taxon>Metazoa</taxon>
        <taxon>Chordata</taxon>
        <taxon>Craniata</taxon>
        <taxon>Vertebrata</taxon>
        <taxon>Euteleostomi</taxon>
        <taxon>Mammalia</taxon>
        <taxon>Eutheria</taxon>
        <taxon>Laurasiatheria</taxon>
        <taxon>Artiodactyla</taxon>
        <taxon>Ruminantia</taxon>
        <taxon>Pecora</taxon>
        <taxon>Bovidae</taxon>
        <taxon>Bovinae</taxon>
        <taxon>Bos</taxon>
    </lineage>
</organism>
<reference key="1">
    <citation type="submission" date="2006-01" db="EMBL/GenBank/DDBJ databases">
        <authorList>
            <consortium name="NIH - Mammalian Gene Collection (MGC) project"/>
        </authorList>
    </citation>
    <scope>NUCLEOTIDE SEQUENCE [LARGE SCALE MRNA]</scope>
    <source>
        <strain>Hereford</strain>
        <tissue>Testis</tissue>
    </source>
</reference>
<accession>Q2KIS1</accession>
<evidence type="ECO:0000250" key="1">
    <source>
        <dbReference type="UniProtKB" id="P51606"/>
    </source>
</evidence>
<evidence type="ECO:0000250" key="2">
    <source>
        <dbReference type="UniProtKB" id="P82343"/>
    </source>
</evidence>
<evidence type="ECO:0000305" key="3"/>
<name>RENBP_BOVIN</name>
<feature type="chain" id="PRO_0000393913" description="N-acylglucosamine 2-epimerase">
    <location>
        <begin position="1"/>
        <end position="422"/>
    </location>
</feature>
<feature type="region of interest" description="Leucine-zipper">
    <location>
        <begin position="185"/>
        <end position="206"/>
    </location>
</feature>
<feature type="site" description="Important for enzyme activity" evidence="1">
    <location>
        <position position="380"/>
    </location>
</feature>
<comment type="function">
    <text evidence="2">Catalyzes the interconversion of N-acetylglucosamine to N-acetylmannosamine. Involved in the N-glycolylneuraminic acid (Neu5Gc) degradation pathway.</text>
</comment>
<comment type="catalytic activity">
    <reaction evidence="1">
        <text>an N-acyl-D-glucosamine = an N-acyl-D-mannosamine</text>
        <dbReference type="Rhea" id="RHEA:19033"/>
        <dbReference type="ChEBI" id="CHEBI:16062"/>
        <dbReference type="ChEBI" id="CHEBI:17274"/>
        <dbReference type="EC" id="5.1.3.8"/>
    </reaction>
    <physiologicalReaction direction="left-to-right" evidence="1">
        <dbReference type="Rhea" id="RHEA:19034"/>
    </physiologicalReaction>
    <physiologicalReaction direction="right-to-left" evidence="1">
        <dbReference type="Rhea" id="RHEA:19035"/>
    </physiologicalReaction>
</comment>
<comment type="pathway">
    <text evidence="1">Amino-sugar metabolism; N-acetylneuraminate degradation.</text>
</comment>
<comment type="subunit">
    <text evidence="1">Homodimer. Forms a heterodimer with renin and inhibits its activity.</text>
</comment>
<comment type="similarity">
    <text evidence="3">Belongs to the N-acylglucosamine 2-epimerase family.</text>
</comment>
<gene>
    <name type="primary">RENBP</name>
</gene>
<sequence length="422" mass="48151">MEKEQETLRAWKDRVARELDRVVAFWLDHSHDQEQGGFFTCLGRDGQVYDDLKYVWLQGRQVWMYCRLYRQFERFRRPELLNAAKAGGEFLLRYAQVAPPAKKCAFVLTRDGRPVKVQRTIFSECFYTMAMNELWRVTGDARYQNEAMEMMDQIVSWVREDPSGLGRPQLPGAPASESMAVPMMLLNLVEQLGEADEELAGISAELGDWCAQRILQHVQRGGQAVLENVSEDGEELSGCLGRHQNPGHALEAGWFLLRYAIQRGDAKLRAHVIDKFLLLPFHSGWDPEHGGLFYFQDADGLCPTQLEWAMKLWWPHSEAMIAFLMGYSETGDPALLRIFYQVAEYTFHRFRDPEYGEWFGYLNRDGKVALTIKGGPFKGCFHVPRCLAMCEEMLNNLLSRLAPASALSTRSPPAGPTRPGAE</sequence>
<keyword id="KW-0413">Isomerase</keyword>
<keyword id="KW-1185">Reference proteome</keyword>